<dbReference type="EC" id="3.6.1.1"/>
<dbReference type="EMBL" id="AL590449">
    <property type="protein sequence ID" value="CAD25753.1"/>
    <property type="molecule type" value="Genomic_DNA"/>
</dbReference>
<dbReference type="RefSeq" id="NP_586149.1">
    <property type="nucleotide sequence ID" value="NM_001041982.1"/>
</dbReference>
<dbReference type="SMR" id="Q8SR69"/>
<dbReference type="FunCoup" id="Q8SR69">
    <property type="interactions" value="145"/>
</dbReference>
<dbReference type="STRING" id="284813.Q8SR69"/>
<dbReference type="GeneID" id="859798"/>
<dbReference type="KEGG" id="ecu:ECU10_0340"/>
<dbReference type="VEuPathDB" id="MicrosporidiaDB:ECU10_0340"/>
<dbReference type="HOGENOM" id="CLU_040684_0_2_1"/>
<dbReference type="InParanoid" id="Q8SR69"/>
<dbReference type="OMA" id="CASQYNA"/>
<dbReference type="OrthoDB" id="1608002at2759"/>
<dbReference type="Proteomes" id="UP000000819">
    <property type="component" value="Chromosome X"/>
</dbReference>
<dbReference type="GO" id="GO:0005737">
    <property type="term" value="C:cytoplasm"/>
    <property type="evidence" value="ECO:0007669"/>
    <property type="project" value="UniProtKB-SubCell"/>
</dbReference>
<dbReference type="GO" id="GO:0004427">
    <property type="term" value="F:inorganic diphosphate phosphatase activity"/>
    <property type="evidence" value="ECO:0007669"/>
    <property type="project" value="UniProtKB-EC"/>
</dbReference>
<dbReference type="GO" id="GO:0000287">
    <property type="term" value="F:magnesium ion binding"/>
    <property type="evidence" value="ECO:0007669"/>
    <property type="project" value="InterPro"/>
</dbReference>
<dbReference type="GO" id="GO:0006796">
    <property type="term" value="P:phosphate-containing compound metabolic process"/>
    <property type="evidence" value="ECO:0007669"/>
    <property type="project" value="InterPro"/>
</dbReference>
<dbReference type="CDD" id="cd00412">
    <property type="entry name" value="pyrophosphatase"/>
    <property type="match status" value="1"/>
</dbReference>
<dbReference type="Gene3D" id="3.90.80.10">
    <property type="entry name" value="Inorganic pyrophosphatase"/>
    <property type="match status" value="1"/>
</dbReference>
<dbReference type="InterPro" id="IPR008162">
    <property type="entry name" value="Pyrophosphatase"/>
</dbReference>
<dbReference type="InterPro" id="IPR036649">
    <property type="entry name" value="Pyrophosphatase_sf"/>
</dbReference>
<dbReference type="PANTHER" id="PTHR10286">
    <property type="entry name" value="INORGANIC PYROPHOSPHATASE"/>
    <property type="match status" value="1"/>
</dbReference>
<dbReference type="Pfam" id="PF00719">
    <property type="entry name" value="Pyrophosphatase"/>
    <property type="match status" value="1"/>
</dbReference>
<dbReference type="SUPFAM" id="SSF50324">
    <property type="entry name" value="Inorganic pyrophosphatase"/>
    <property type="match status" value="1"/>
</dbReference>
<dbReference type="PROSITE" id="PS00387">
    <property type="entry name" value="PPASE"/>
    <property type="match status" value="1"/>
</dbReference>
<reference key="1">
    <citation type="journal article" date="2001" name="Nature">
        <title>Genome sequence and gene compaction of the eukaryote parasite Encephalitozoon cuniculi.</title>
        <authorList>
            <person name="Katinka M.D."/>
            <person name="Duprat S."/>
            <person name="Cornillot E."/>
            <person name="Metenier G."/>
            <person name="Thomarat F."/>
            <person name="Prensier G."/>
            <person name="Barbe V."/>
            <person name="Peyretaillade E."/>
            <person name="Brottier P."/>
            <person name="Wincker P."/>
            <person name="Delbac F."/>
            <person name="El Alaoui H."/>
            <person name="Peyret P."/>
            <person name="Saurin W."/>
            <person name="Gouy M."/>
            <person name="Weissenbach J."/>
            <person name="Vivares C.P."/>
        </authorList>
    </citation>
    <scope>NUCLEOTIDE SEQUENCE [LARGE SCALE GENOMIC DNA]</scope>
    <source>
        <strain>GB-M1</strain>
    </source>
</reference>
<reference key="2">
    <citation type="journal article" date="2006" name="Proteomics">
        <title>Proteomic analysis of the eukaryotic parasite Encephalitozoon cuniculi (microsporidia): a reference map for proteins expressed in late sporogonial stages.</title>
        <authorList>
            <person name="Brosson D."/>
            <person name="Kuhn L."/>
            <person name="Delbac F."/>
            <person name="Garin J."/>
            <person name="Vivares C.P."/>
            <person name="Texier C."/>
        </authorList>
    </citation>
    <scope>IDENTIFICATION BY MASS SPECTROMETRY [LARGE SCALE ANALYSIS]</scope>
    <scope>DEVELOPMENTAL STAGE</scope>
</reference>
<proteinExistence type="evidence at protein level"/>
<protein>
    <recommendedName>
        <fullName>Inorganic pyrophosphatase</fullName>
        <ecNumber>3.6.1.1</ecNumber>
    </recommendedName>
    <alternativeName>
        <fullName>Pyrophosphate phospho-hydrolase</fullName>
        <shortName>PPase</shortName>
    </alternativeName>
</protein>
<comment type="function">
    <text>Involved in osmoadaptation.</text>
</comment>
<comment type="catalytic activity">
    <reaction>
        <text>diphosphate + H2O = 2 phosphate + H(+)</text>
        <dbReference type="Rhea" id="RHEA:24576"/>
        <dbReference type="ChEBI" id="CHEBI:15377"/>
        <dbReference type="ChEBI" id="CHEBI:15378"/>
        <dbReference type="ChEBI" id="CHEBI:33019"/>
        <dbReference type="ChEBI" id="CHEBI:43474"/>
        <dbReference type="EC" id="3.6.1.1"/>
    </reaction>
</comment>
<comment type="cofactor">
    <cofactor evidence="1">
        <name>Mg(2+)</name>
        <dbReference type="ChEBI" id="CHEBI:18420"/>
    </cofactor>
</comment>
<comment type="subcellular location">
    <subcellularLocation>
        <location evidence="1">Cytoplasm</location>
    </subcellularLocation>
</comment>
<comment type="developmental stage">
    <text evidence="2">Expressed in late sporogonial stages.</text>
</comment>
<comment type="similarity">
    <text evidence="3">Belongs to the PPase family.</text>
</comment>
<feature type="chain" id="PRO_0000378552" description="Inorganic pyrophosphatase">
    <location>
        <begin position="1"/>
        <end position="277"/>
    </location>
</feature>
<feature type="binding site" evidence="1">
    <location>
        <position position="80"/>
    </location>
    <ligand>
        <name>diphosphate</name>
        <dbReference type="ChEBI" id="CHEBI:33019"/>
    </ligand>
</feature>
<feature type="binding site" evidence="1">
    <location>
        <position position="117"/>
    </location>
    <ligand>
        <name>Mg(2+)</name>
        <dbReference type="ChEBI" id="CHEBI:18420"/>
        <label>1</label>
    </ligand>
</feature>
<feature type="binding site" evidence="1">
    <location>
        <position position="122"/>
    </location>
    <ligand>
        <name>Mg(2+)</name>
        <dbReference type="ChEBI" id="CHEBI:18420"/>
        <label>1</label>
    </ligand>
</feature>
<feature type="binding site" evidence="1">
    <location>
        <position position="122"/>
    </location>
    <ligand>
        <name>Mg(2+)</name>
        <dbReference type="ChEBI" id="CHEBI:18420"/>
        <label>2</label>
    </ligand>
</feature>
<feature type="binding site" evidence="1">
    <location>
        <position position="154"/>
    </location>
    <ligand>
        <name>Mg(2+)</name>
        <dbReference type="ChEBI" id="CHEBI:18420"/>
        <label>1</label>
    </ligand>
</feature>
<organism>
    <name type="scientific">Encephalitozoon cuniculi (strain GB-M1)</name>
    <name type="common">Microsporidian parasite</name>
    <dbReference type="NCBI Taxonomy" id="284813"/>
    <lineage>
        <taxon>Eukaryota</taxon>
        <taxon>Fungi</taxon>
        <taxon>Fungi incertae sedis</taxon>
        <taxon>Microsporidia</taxon>
        <taxon>Unikaryonidae</taxon>
        <taxon>Encephalitozoon</taxon>
    </lineage>
</organism>
<keyword id="KW-0963">Cytoplasm</keyword>
<keyword id="KW-0378">Hydrolase</keyword>
<keyword id="KW-0460">Magnesium</keyword>
<keyword id="KW-0479">Metal-binding</keyword>
<keyword id="KW-1185">Reference proteome</keyword>
<keyword id="KW-0346">Stress response</keyword>
<accession>Q8SR69</accession>
<evidence type="ECO:0000250" key="1"/>
<evidence type="ECO:0000269" key="2">
    <source>
    </source>
</evidence>
<evidence type="ECO:0000305" key="3"/>
<name>IPYR_ENCCU</name>
<gene>
    <name type="primary">IPP1</name>
    <name type="ordered locus">ECU10_0340</name>
</gene>
<sequence>MPAYSTVRVGKKYSPSFKVYVTQDGKIVSPFHDIPLYMSGNREIVSVVNEIPRFENGKFEINKEEAFNPIKQDIKKGWPRFVKNVFPMKGYLWNYGALPQTWENPHEVDRHTGARGDNDPLDVIEIGRKRKEVGEVYQAKVLGSIALVDEGECDWKVVVIDVNDEKAKEINDIEDVRKVYEGLLEQTIFWFKNYKVPDGKPKNNFALDGKYMDKKFTVGIIKSAYENWCGMINSKSDTNICKENSTLMDKVDSPAIIQEDLSDEEVPECVHQFEFIK</sequence>